<reference key="1">
    <citation type="submission" date="2006-09" db="EMBL/GenBank/DDBJ databases">
        <authorList>
            <consortium name="The Klebsiella pneumonia Genome Sequencing Project"/>
            <person name="McClelland M."/>
            <person name="Sanderson E.K."/>
            <person name="Spieth J."/>
            <person name="Clifton W.S."/>
            <person name="Latreille P."/>
            <person name="Sabo A."/>
            <person name="Pepin K."/>
            <person name="Bhonagiri V."/>
            <person name="Porwollik S."/>
            <person name="Ali J."/>
            <person name="Wilson R.K."/>
        </authorList>
    </citation>
    <scope>NUCLEOTIDE SEQUENCE [LARGE SCALE GENOMIC DNA]</scope>
    <source>
        <strain>ATCC 700721 / MGH 78578</strain>
    </source>
</reference>
<accession>A6T5A7</accession>
<keyword id="KW-0175">Coiled coil</keyword>
<keyword id="KW-0963">Cytoplasm</keyword>
<keyword id="KW-0346">Stress response</keyword>
<proteinExistence type="inferred from homology"/>
<organism>
    <name type="scientific">Klebsiella pneumoniae subsp. pneumoniae (strain ATCC 700721 / MGH 78578)</name>
    <dbReference type="NCBI Taxonomy" id="272620"/>
    <lineage>
        <taxon>Bacteria</taxon>
        <taxon>Pseudomonadati</taxon>
        <taxon>Pseudomonadota</taxon>
        <taxon>Gammaproteobacteria</taxon>
        <taxon>Enterobacterales</taxon>
        <taxon>Enterobacteriaceae</taxon>
        <taxon>Klebsiella/Raoultella group</taxon>
        <taxon>Klebsiella</taxon>
        <taxon>Klebsiella pneumoniae complex</taxon>
    </lineage>
</organism>
<sequence length="86" mass="9845">MKNLIAELLVKLAQKEEEAKELTVQVEALEIVVTALLRHMEHDAQQALIQDIEQAIDQVTPCPPVNDHDAMLLQQYLKKLLRHPRS</sequence>
<comment type="function">
    <text evidence="1">Inhibits RpoS proteolysis by regulating RssB activity, thereby increasing the stability of the sigma stress factor RpoS especially during phosphate starvation, but also in stationary phase and during nitrogen starvation. Its effect on RpoS stability is due to its interaction with RssB, which probably blocks the interaction of RssB with RpoS, and the consequent delivery of the RssB-RpoS complex to the ClpXP protein degradation pathway.</text>
</comment>
<comment type="subunit">
    <text evidence="1">Interacts with RssB.</text>
</comment>
<comment type="subcellular location">
    <subcellularLocation>
        <location evidence="1">Cytoplasm</location>
    </subcellularLocation>
</comment>
<comment type="similarity">
    <text evidence="1">Belongs to the IraP family.</text>
</comment>
<name>IRAP_KLEP7</name>
<dbReference type="EMBL" id="CP000647">
    <property type="protein sequence ID" value="ABR75778.1"/>
    <property type="molecule type" value="Genomic_DNA"/>
</dbReference>
<dbReference type="RefSeq" id="WP_002890221.1">
    <property type="nucleotide sequence ID" value="NC_009648.1"/>
</dbReference>
<dbReference type="SMR" id="A6T5A7"/>
<dbReference type="STRING" id="272620.KPN_00326"/>
<dbReference type="jPOST" id="A6T5A7"/>
<dbReference type="PaxDb" id="272620-KPN_00326"/>
<dbReference type="EnsemblBacteria" id="ABR75778">
    <property type="protein sequence ID" value="ABR75778"/>
    <property type="gene ID" value="KPN_00326"/>
</dbReference>
<dbReference type="KEGG" id="kpn:KPN_00326"/>
<dbReference type="HOGENOM" id="CLU_169517_0_0_6"/>
<dbReference type="Proteomes" id="UP000000265">
    <property type="component" value="Chromosome"/>
</dbReference>
<dbReference type="GO" id="GO:0005737">
    <property type="term" value="C:cytoplasm"/>
    <property type="evidence" value="ECO:0007669"/>
    <property type="project" value="UniProtKB-SubCell"/>
</dbReference>
<dbReference type="GO" id="GO:0009267">
    <property type="term" value="P:cellular response to starvation"/>
    <property type="evidence" value="ECO:0007669"/>
    <property type="project" value="UniProtKB-UniRule"/>
</dbReference>
<dbReference type="HAMAP" id="MF_01198">
    <property type="entry name" value="Anti_adapt_IraP"/>
    <property type="match status" value="1"/>
</dbReference>
<dbReference type="InterPro" id="IPR019732">
    <property type="entry name" value="SigmaS_Anti-adapt_IraP"/>
</dbReference>
<dbReference type="NCBIfam" id="NF007598">
    <property type="entry name" value="PRK10244.1"/>
    <property type="match status" value="1"/>
</dbReference>
<dbReference type="Pfam" id="PF10796">
    <property type="entry name" value="Anti-adapt_IraP"/>
    <property type="match status" value="1"/>
</dbReference>
<protein>
    <recommendedName>
        <fullName evidence="1">Anti-adapter protein IraP</fullName>
    </recommendedName>
</protein>
<feature type="chain" id="PRO_0000337857" description="Anti-adapter protein IraP">
    <location>
        <begin position="1"/>
        <end position="86"/>
    </location>
</feature>
<feature type="coiled-coil region" evidence="1">
    <location>
        <begin position="1"/>
        <end position="38"/>
    </location>
</feature>
<evidence type="ECO:0000255" key="1">
    <source>
        <dbReference type="HAMAP-Rule" id="MF_01198"/>
    </source>
</evidence>
<gene>
    <name evidence="1" type="primary">iraP</name>
    <name type="ordered locus">KPN78578_03170</name>
    <name type="ORF">KPN_00326</name>
</gene>